<feature type="signal peptide" evidence="1">
    <location>
        <begin position="1"/>
        <end position="20"/>
    </location>
</feature>
<feature type="chain" id="PRO_5003342633" description="Antimicrobial peptide MeuNaTxbeta-2">
    <location>
        <begin position="21"/>
        <end position="84"/>
    </location>
</feature>
<feature type="domain" description="LCN-type CS-alpha/beta" evidence="2">
    <location>
        <begin position="21"/>
        <end position="83"/>
    </location>
</feature>
<feature type="disulfide bond" evidence="2">
    <location>
        <begin position="32"/>
        <end position="82"/>
    </location>
</feature>
<feature type="disulfide bond" evidence="2">
    <location>
        <begin position="36"/>
        <end position="57"/>
    </location>
</feature>
<feature type="disulfide bond" evidence="2">
    <location>
        <begin position="43"/>
        <end position="64"/>
    </location>
</feature>
<feature type="disulfide bond" evidence="2">
    <location>
        <begin position="47"/>
        <end position="66"/>
    </location>
</feature>
<organism>
    <name type="scientific">Mesobuthus eupeus</name>
    <name type="common">Lesser Asian scorpion</name>
    <name type="synonym">Buthus eupeus</name>
    <dbReference type="NCBI Taxonomy" id="34648"/>
    <lineage>
        <taxon>Eukaryota</taxon>
        <taxon>Metazoa</taxon>
        <taxon>Ecdysozoa</taxon>
        <taxon>Arthropoda</taxon>
        <taxon>Chelicerata</taxon>
        <taxon>Arachnida</taxon>
        <taxon>Scorpiones</taxon>
        <taxon>Buthida</taxon>
        <taxon>Buthoidea</taxon>
        <taxon>Buthidae</taxon>
        <taxon>Mesobuthus</taxon>
    </lineage>
</organism>
<proteinExistence type="evidence at protein level"/>
<reference evidence="6" key="1">
    <citation type="submission" date="2010-05" db="EMBL/GenBank/DDBJ databases">
        <title>Molecular characterization of a new toxin-like peptide with antibacterial activity.</title>
        <authorList>
            <person name="Zhu S."/>
            <person name="Gao B."/>
        </authorList>
    </citation>
    <scope>NUCLEOTIDE SEQUENCE [MRNA]</scope>
    <source>
        <tissue>Venom gland</tissue>
    </source>
</reference>
<reference key="2">
    <citation type="journal article" date="2018" name="Amino Acids">
        <title>Meucin-49, a multifunctional scorpion venom peptide with bactericidal synergy with neurotoxins.</title>
        <authorList>
            <person name="Gao B."/>
            <person name="Dalziel J."/>
            <person name="Tanzi S."/>
            <person name="Zhu S."/>
        </authorList>
    </citation>
    <scope>NUCLEOTIDE SEQUENCE [MRNA] OF 21-84</scope>
    <scope>PROTEIN SEQUENCE OF 21-40</scope>
    <scope>FUNCTION</scope>
    <scope>MASS SPECTROMETRY</scope>
    <scope>SUBCELLULAR LOCATION</scope>
    <source>
        <tissue>Venom</tissue>
        <tissue>Venom gland</tissue>
    </source>
</reference>
<sequence length="84" mass="9668">MMKTVIVLIVFSLVMIVVKSDNGYLLDKYTGCKIWCVINNDSCNSHCIGSGGYYGYCYFWKLACYCQGAPRSELWHYETNRCRA</sequence>
<protein>
    <recommendedName>
        <fullName evidence="4">Antimicrobial peptide MeuNaTxbeta-2</fullName>
        <shortName evidence="4">MTbeta-2</shortName>
    </recommendedName>
    <alternativeName>
        <fullName evidence="6">Antibacterial peptide MeuNaTx-15</fullName>
    </alternativeName>
</protein>
<accession>F6K6F3</accession>
<name>SCX2_MESEU</name>
<evidence type="ECO:0000255" key="1"/>
<evidence type="ECO:0000255" key="2">
    <source>
        <dbReference type="PROSITE-ProRule" id="PRU01210"/>
    </source>
</evidence>
<evidence type="ECO:0000269" key="3">
    <source>
    </source>
</evidence>
<evidence type="ECO:0000303" key="4">
    <source>
    </source>
</evidence>
<evidence type="ECO:0000305" key="5">
    <source>
    </source>
</evidence>
<evidence type="ECO:0000312" key="6">
    <source>
        <dbReference type="EMBL" id="ADT89767.1"/>
    </source>
</evidence>
<keyword id="KW-0044">Antibiotic</keyword>
<keyword id="KW-0929">Antimicrobial</keyword>
<keyword id="KW-0903">Direct protein sequencing</keyword>
<keyword id="KW-1015">Disulfide bond</keyword>
<keyword id="KW-0964">Secreted</keyword>
<keyword id="KW-0732">Signal</keyword>
<comment type="function">
    <text evidence="3">Antimicrobial peptide with activity against both Gram-positive and -negative bacteria.</text>
</comment>
<comment type="subcellular location">
    <subcellularLocation>
        <location evidence="3">Secreted</location>
    </subcellularLocation>
</comment>
<comment type="tissue specificity">
    <text evidence="5">Expressed by the venom gland.</text>
</comment>
<comment type="mass spectrometry" mass="7429.45" method="MALDI" evidence="3"/>
<comment type="similarity">
    <text evidence="1">Belongs to the long (4 C-C) scorpion toxin superfamily. Sodium channel inhibitor family.</text>
</comment>
<dbReference type="EMBL" id="HM347334">
    <property type="protein sequence ID" value="ADT89767.1"/>
    <property type="molecule type" value="mRNA"/>
</dbReference>
<dbReference type="GO" id="GO:0005576">
    <property type="term" value="C:extracellular region"/>
    <property type="evidence" value="ECO:0007669"/>
    <property type="project" value="UniProtKB-SubCell"/>
</dbReference>
<dbReference type="GO" id="GO:0019871">
    <property type="term" value="F:sodium channel inhibitor activity"/>
    <property type="evidence" value="ECO:0007669"/>
    <property type="project" value="InterPro"/>
</dbReference>
<dbReference type="GO" id="GO:0090729">
    <property type="term" value="F:toxin activity"/>
    <property type="evidence" value="ECO:0007669"/>
    <property type="project" value="InterPro"/>
</dbReference>
<dbReference type="GO" id="GO:0042742">
    <property type="term" value="P:defense response to bacterium"/>
    <property type="evidence" value="ECO:0007669"/>
    <property type="project" value="UniProtKB-KW"/>
</dbReference>
<dbReference type="CDD" id="cd23106">
    <property type="entry name" value="neurotoxins_LC_scorpion"/>
    <property type="match status" value="1"/>
</dbReference>
<dbReference type="Gene3D" id="3.30.30.10">
    <property type="entry name" value="Knottin, scorpion toxin-like"/>
    <property type="match status" value="1"/>
</dbReference>
<dbReference type="InterPro" id="IPR044062">
    <property type="entry name" value="LCN-type_CS_alpha_beta_dom"/>
</dbReference>
<dbReference type="InterPro" id="IPR003614">
    <property type="entry name" value="Scorpion_toxin-like"/>
</dbReference>
<dbReference type="InterPro" id="IPR036574">
    <property type="entry name" value="Scorpion_toxin-like_sf"/>
</dbReference>
<dbReference type="InterPro" id="IPR018218">
    <property type="entry name" value="Scorpion_toxinL"/>
</dbReference>
<dbReference type="InterPro" id="IPR002061">
    <property type="entry name" value="Scorpion_toxinL/defensin"/>
</dbReference>
<dbReference type="Pfam" id="PF00537">
    <property type="entry name" value="Toxin_3"/>
    <property type="match status" value="1"/>
</dbReference>
<dbReference type="PRINTS" id="PR00285">
    <property type="entry name" value="SCORPNTOXIN"/>
</dbReference>
<dbReference type="SMART" id="SM00505">
    <property type="entry name" value="Knot1"/>
    <property type="match status" value="1"/>
</dbReference>
<dbReference type="SUPFAM" id="SSF57095">
    <property type="entry name" value="Scorpion toxin-like"/>
    <property type="match status" value="1"/>
</dbReference>
<dbReference type="PROSITE" id="PS51863">
    <property type="entry name" value="LCN_CSAB"/>
    <property type="match status" value="1"/>
</dbReference>